<protein>
    <recommendedName>
        <fullName evidence="1">Arginine deiminase</fullName>
        <shortName evidence="1">ADI</shortName>
        <ecNumber evidence="1">3.5.3.6</ecNumber>
    </recommendedName>
    <alternativeName>
        <fullName evidence="1">Arginine dihydrolase</fullName>
        <shortName evidence="1">AD</shortName>
    </alternativeName>
</protein>
<keyword id="KW-0056">Arginine metabolism</keyword>
<keyword id="KW-0963">Cytoplasm</keyword>
<keyword id="KW-0378">Hydrolase</keyword>
<keyword id="KW-1185">Reference proteome</keyword>
<dbReference type="EC" id="3.5.3.6" evidence="1"/>
<dbReference type="EMBL" id="AP008937">
    <property type="protein sequence ID" value="BAG26636.1"/>
    <property type="molecule type" value="Genomic_DNA"/>
</dbReference>
<dbReference type="RefSeq" id="WP_004563316.1">
    <property type="nucleotide sequence ID" value="NC_010610.1"/>
</dbReference>
<dbReference type="SMR" id="B2GAF4"/>
<dbReference type="GeneID" id="83715378"/>
<dbReference type="KEGG" id="lfe:LAF_0300"/>
<dbReference type="eggNOG" id="COG2235">
    <property type="taxonomic scope" value="Bacteria"/>
</dbReference>
<dbReference type="HOGENOM" id="CLU_052662_0_1_9"/>
<dbReference type="UniPathway" id="UPA00254">
    <property type="reaction ID" value="UER00364"/>
</dbReference>
<dbReference type="Proteomes" id="UP000001697">
    <property type="component" value="Chromosome"/>
</dbReference>
<dbReference type="GO" id="GO:0005737">
    <property type="term" value="C:cytoplasm"/>
    <property type="evidence" value="ECO:0007669"/>
    <property type="project" value="UniProtKB-SubCell"/>
</dbReference>
<dbReference type="GO" id="GO:0016990">
    <property type="term" value="F:arginine deiminase activity"/>
    <property type="evidence" value="ECO:0007669"/>
    <property type="project" value="UniProtKB-UniRule"/>
</dbReference>
<dbReference type="GO" id="GO:0019547">
    <property type="term" value="P:arginine catabolic process to ornithine"/>
    <property type="evidence" value="ECO:0007669"/>
    <property type="project" value="UniProtKB-UniRule"/>
</dbReference>
<dbReference type="GO" id="GO:0019546">
    <property type="term" value="P:arginine deiminase pathway"/>
    <property type="evidence" value="ECO:0007669"/>
    <property type="project" value="TreeGrafter"/>
</dbReference>
<dbReference type="Gene3D" id="1.10.3930.10">
    <property type="entry name" value="Arginine deiminase"/>
    <property type="match status" value="1"/>
</dbReference>
<dbReference type="Gene3D" id="3.75.10.10">
    <property type="entry name" value="L-arginine/glycine Amidinotransferase, Chain A"/>
    <property type="match status" value="1"/>
</dbReference>
<dbReference type="HAMAP" id="MF_00242">
    <property type="entry name" value="Arg_deiminase"/>
    <property type="match status" value="1"/>
</dbReference>
<dbReference type="InterPro" id="IPR003876">
    <property type="entry name" value="Arg_deiminase"/>
</dbReference>
<dbReference type="NCBIfam" id="TIGR01078">
    <property type="entry name" value="arcA"/>
    <property type="match status" value="1"/>
</dbReference>
<dbReference type="NCBIfam" id="NF002381">
    <property type="entry name" value="PRK01388.1"/>
    <property type="match status" value="1"/>
</dbReference>
<dbReference type="PANTHER" id="PTHR47271">
    <property type="entry name" value="ARGININE DEIMINASE"/>
    <property type="match status" value="1"/>
</dbReference>
<dbReference type="PANTHER" id="PTHR47271:SF2">
    <property type="entry name" value="ARGININE DEIMINASE"/>
    <property type="match status" value="1"/>
</dbReference>
<dbReference type="Pfam" id="PF02274">
    <property type="entry name" value="ADI"/>
    <property type="match status" value="1"/>
</dbReference>
<dbReference type="PIRSF" id="PIRSF006356">
    <property type="entry name" value="Arg_deiminase"/>
    <property type="match status" value="1"/>
</dbReference>
<dbReference type="PRINTS" id="PR01466">
    <property type="entry name" value="ARGDEIMINASE"/>
</dbReference>
<dbReference type="SUPFAM" id="SSF55909">
    <property type="entry name" value="Pentein"/>
    <property type="match status" value="1"/>
</dbReference>
<proteinExistence type="inferred from homology"/>
<evidence type="ECO:0000255" key="1">
    <source>
        <dbReference type="HAMAP-Rule" id="MF_00242"/>
    </source>
</evidence>
<accession>B2GAF4</accession>
<comment type="catalytic activity">
    <reaction evidence="1">
        <text>L-arginine + H2O = L-citrulline + NH4(+)</text>
        <dbReference type="Rhea" id="RHEA:19597"/>
        <dbReference type="ChEBI" id="CHEBI:15377"/>
        <dbReference type="ChEBI" id="CHEBI:28938"/>
        <dbReference type="ChEBI" id="CHEBI:32682"/>
        <dbReference type="ChEBI" id="CHEBI:57743"/>
        <dbReference type="EC" id="3.5.3.6"/>
    </reaction>
</comment>
<comment type="pathway">
    <text evidence="1">Amino-acid degradation; L-arginine degradation via ADI pathway; carbamoyl phosphate from L-arginine: step 1/2.</text>
</comment>
<comment type="subcellular location">
    <subcellularLocation>
        <location evidence="1">Cytoplasm</location>
    </subcellularLocation>
</comment>
<comment type="similarity">
    <text evidence="1">Belongs to the arginine deiminase family.</text>
</comment>
<organism>
    <name type="scientific">Limosilactobacillus fermentum (strain NBRC 3956 / LMG 18251)</name>
    <name type="common">Lactobacillus fermentum</name>
    <dbReference type="NCBI Taxonomy" id="334390"/>
    <lineage>
        <taxon>Bacteria</taxon>
        <taxon>Bacillati</taxon>
        <taxon>Bacillota</taxon>
        <taxon>Bacilli</taxon>
        <taxon>Lactobacillales</taxon>
        <taxon>Lactobacillaceae</taxon>
        <taxon>Limosilactobacillus</taxon>
    </lineage>
</organism>
<feature type="chain" id="PRO_1000100738" description="Arginine deiminase">
    <location>
        <begin position="1"/>
        <end position="407"/>
    </location>
</feature>
<feature type="active site" description="Amidino-cysteine intermediate" evidence="1">
    <location>
        <position position="397"/>
    </location>
</feature>
<sequence>MTSPIHVTSEIGKLKTVMLHRPGREIENITPDYMERLLFDDIPYLPIAQEEHDFFAQTLRDQGIEVLYFEKLAAEALASDDVRKEFLNRMIAESGYVAGTTHDALYDYLYQMTPQEMVDKIIEGVRGTDIDIAQPDLQSVSENTDWPFLMDPMPNAYFTRDPQASIGDGISINKMTFPARQRESLITEYIINHHPRFAGQVEVWRDRNHESHIEGGDELVLSDHVLAIGVSQRTTADAIEDIARNLFKDSNYDTVIAISIPHNHAMMHLDTVFTMINHDQFTVHPAILDDKGEVDNWVLHPGKDGEITIEHHTDIKAVLKQALNKPEIDLIPTGNGDPIVAPREQWNDGSNTLAIAPGEVVTYNRNYVSNALLKEHGILVHEVRSSELSRGRGGPRCMSCPIVREDL</sequence>
<gene>
    <name evidence="1" type="primary">arcA</name>
    <name type="ordered locus">LAF_0300</name>
</gene>
<name>ARCA_LIMF3</name>
<reference key="1">
    <citation type="journal article" date="2008" name="DNA Res.">
        <title>Comparative genome analysis of Lactobacillus reuteri and Lactobacillus fermentum reveal a genomic island for reuterin and cobalamin production.</title>
        <authorList>
            <person name="Morita H."/>
            <person name="Toh H."/>
            <person name="Fukuda S."/>
            <person name="Horikawa H."/>
            <person name="Oshima K."/>
            <person name="Suzuki T."/>
            <person name="Murakami M."/>
            <person name="Hisamatsu S."/>
            <person name="Kato Y."/>
            <person name="Takizawa T."/>
            <person name="Fukuoka H."/>
            <person name="Yoshimura T."/>
            <person name="Itoh K."/>
            <person name="O'Sullivan D.J."/>
            <person name="McKay L.L."/>
            <person name="Ohno H."/>
            <person name="Kikuchi J."/>
            <person name="Masaoka T."/>
            <person name="Hattori M."/>
        </authorList>
    </citation>
    <scope>NUCLEOTIDE SEQUENCE [LARGE SCALE GENOMIC DNA]</scope>
    <source>
        <strain>NBRC 3956 / LMG 18251</strain>
    </source>
</reference>